<accession>Q8XRC2</accession>
<keyword id="KW-0067">ATP-binding</keyword>
<keyword id="KW-0378">Hydrolase</keyword>
<keyword id="KW-0547">Nucleotide-binding</keyword>
<keyword id="KW-0614">Plasmid</keyword>
<keyword id="KW-1185">Reference proteome</keyword>
<gene>
    <name evidence="1" type="primary">pxpA2</name>
    <name type="ordered locus">RSp0936</name>
    <name type="ORF">RS05397</name>
</gene>
<feature type="chain" id="PRO_0000185035" description="5-oxoprolinase subunit A 2">
    <location>
        <begin position="1"/>
        <end position="260"/>
    </location>
</feature>
<dbReference type="EC" id="3.5.2.9" evidence="1"/>
<dbReference type="EMBL" id="AL646053">
    <property type="protein sequence ID" value="CAD18087.1"/>
    <property type="molecule type" value="Genomic_DNA"/>
</dbReference>
<dbReference type="RefSeq" id="WP_011004229.1">
    <property type="nucleotide sequence ID" value="NC_003296.1"/>
</dbReference>
<dbReference type="SMR" id="Q8XRC2"/>
<dbReference type="STRING" id="267608.RSp0936"/>
<dbReference type="EnsemblBacteria" id="CAD18087">
    <property type="protein sequence ID" value="CAD18087"/>
    <property type="gene ID" value="RSp0936"/>
</dbReference>
<dbReference type="KEGG" id="rso:RSp0936"/>
<dbReference type="eggNOG" id="COG1540">
    <property type="taxonomic scope" value="Bacteria"/>
</dbReference>
<dbReference type="HOGENOM" id="CLU_069535_0_0_4"/>
<dbReference type="Proteomes" id="UP000001436">
    <property type="component" value="Plasmid megaplasmid Rsp"/>
</dbReference>
<dbReference type="GO" id="GO:0017168">
    <property type="term" value="F:5-oxoprolinase (ATP-hydrolyzing) activity"/>
    <property type="evidence" value="ECO:0007669"/>
    <property type="project" value="UniProtKB-UniRule"/>
</dbReference>
<dbReference type="GO" id="GO:0005524">
    <property type="term" value="F:ATP binding"/>
    <property type="evidence" value="ECO:0007669"/>
    <property type="project" value="UniProtKB-UniRule"/>
</dbReference>
<dbReference type="GO" id="GO:0005975">
    <property type="term" value="P:carbohydrate metabolic process"/>
    <property type="evidence" value="ECO:0007669"/>
    <property type="project" value="InterPro"/>
</dbReference>
<dbReference type="CDD" id="cd10787">
    <property type="entry name" value="LamB_YcsF_like"/>
    <property type="match status" value="1"/>
</dbReference>
<dbReference type="Gene3D" id="3.20.20.370">
    <property type="entry name" value="Glycoside hydrolase/deacetylase"/>
    <property type="match status" value="1"/>
</dbReference>
<dbReference type="HAMAP" id="MF_00691">
    <property type="entry name" value="PxpA"/>
    <property type="match status" value="1"/>
</dbReference>
<dbReference type="InterPro" id="IPR011330">
    <property type="entry name" value="Glyco_hydro/deAcase_b/a-brl"/>
</dbReference>
<dbReference type="InterPro" id="IPR005501">
    <property type="entry name" value="LamB/YcsF/PxpA-like"/>
</dbReference>
<dbReference type="NCBIfam" id="NF003814">
    <property type="entry name" value="PRK05406.1-3"/>
    <property type="match status" value="1"/>
</dbReference>
<dbReference type="NCBIfam" id="NF003816">
    <property type="entry name" value="PRK05406.1-5"/>
    <property type="match status" value="1"/>
</dbReference>
<dbReference type="PANTHER" id="PTHR30292:SF0">
    <property type="entry name" value="5-OXOPROLINASE SUBUNIT A"/>
    <property type="match status" value="1"/>
</dbReference>
<dbReference type="PANTHER" id="PTHR30292">
    <property type="entry name" value="UNCHARACTERIZED PROTEIN YBGL-RELATED"/>
    <property type="match status" value="1"/>
</dbReference>
<dbReference type="Pfam" id="PF03746">
    <property type="entry name" value="LamB_YcsF"/>
    <property type="match status" value="1"/>
</dbReference>
<dbReference type="SUPFAM" id="SSF88713">
    <property type="entry name" value="Glycoside hydrolase/deacetylase"/>
    <property type="match status" value="1"/>
</dbReference>
<evidence type="ECO:0000255" key="1">
    <source>
        <dbReference type="HAMAP-Rule" id="MF_00691"/>
    </source>
</evidence>
<proteinExistence type="inferred from homology"/>
<reference key="1">
    <citation type="journal article" date="2002" name="Nature">
        <title>Genome sequence of the plant pathogen Ralstonia solanacearum.</title>
        <authorList>
            <person name="Salanoubat M."/>
            <person name="Genin S."/>
            <person name="Artiguenave F."/>
            <person name="Gouzy J."/>
            <person name="Mangenot S."/>
            <person name="Arlat M."/>
            <person name="Billault A."/>
            <person name="Brottier P."/>
            <person name="Camus J.-C."/>
            <person name="Cattolico L."/>
            <person name="Chandler M."/>
            <person name="Choisne N."/>
            <person name="Claudel-Renard C."/>
            <person name="Cunnac S."/>
            <person name="Demange N."/>
            <person name="Gaspin C."/>
            <person name="Lavie M."/>
            <person name="Moisan A."/>
            <person name="Robert C."/>
            <person name="Saurin W."/>
            <person name="Schiex T."/>
            <person name="Siguier P."/>
            <person name="Thebault P."/>
            <person name="Whalen M."/>
            <person name="Wincker P."/>
            <person name="Levy M."/>
            <person name="Weissenbach J."/>
            <person name="Boucher C.A."/>
        </authorList>
    </citation>
    <scope>NUCLEOTIDE SEQUENCE [LARGE SCALE GENOMIC DNA]</scope>
    <source>
        <strain>ATCC BAA-1114 / GMI1000</strain>
    </source>
</reference>
<comment type="function">
    <text evidence="1">Catalyzes the cleavage of 5-oxoproline to form L-glutamate coupled to the hydrolysis of ATP to ADP and inorganic phosphate.</text>
</comment>
<comment type="catalytic activity">
    <reaction evidence="1">
        <text>5-oxo-L-proline + ATP + 2 H2O = L-glutamate + ADP + phosphate + H(+)</text>
        <dbReference type="Rhea" id="RHEA:10348"/>
        <dbReference type="ChEBI" id="CHEBI:15377"/>
        <dbReference type="ChEBI" id="CHEBI:15378"/>
        <dbReference type="ChEBI" id="CHEBI:29985"/>
        <dbReference type="ChEBI" id="CHEBI:30616"/>
        <dbReference type="ChEBI" id="CHEBI:43474"/>
        <dbReference type="ChEBI" id="CHEBI:58402"/>
        <dbReference type="ChEBI" id="CHEBI:456216"/>
        <dbReference type="EC" id="3.5.2.9"/>
    </reaction>
</comment>
<comment type="subunit">
    <text evidence="1">Forms a complex composed of PxpA, PxpB and PxpC.</text>
</comment>
<comment type="similarity">
    <text evidence="1">Belongs to the LamB/PxpA family.</text>
</comment>
<name>PXPA2_RALN1</name>
<sequence>MEIDLNADLGEGYGPWRMGDDEAMMSLISSANIACGFHAGDPLIMDRTVRLAIEGGVDVGAHVGFPDRQGFGRRFMQVDIPDLTAMVTYQLGALAGIARAHGRRVTHMSFHGALGNRAAADPAWATPLLKAIAAFDPNLIISTSSSQAIEGAAAAFGLPVGVSFLADRAYDDQGLLVSRGLPGAVIHDEAQVLARVRRLLTEGTIVTHAGNVLPMQPRSILVHGDTPGAVALTQRLRAEIESLGGRIVPISQQLGFSTVP</sequence>
<protein>
    <recommendedName>
        <fullName evidence="1">5-oxoprolinase subunit A 2</fullName>
        <shortName evidence="1">5-OPase subunit A 2</shortName>
        <ecNumber evidence="1">3.5.2.9</ecNumber>
    </recommendedName>
    <alternativeName>
        <fullName evidence="1">5-oxoprolinase (ATP-hydrolyzing) subunit A 2</fullName>
    </alternativeName>
</protein>
<organism>
    <name type="scientific">Ralstonia nicotianae (strain ATCC BAA-1114 / GMI1000)</name>
    <name type="common">Ralstonia solanacearum</name>
    <dbReference type="NCBI Taxonomy" id="267608"/>
    <lineage>
        <taxon>Bacteria</taxon>
        <taxon>Pseudomonadati</taxon>
        <taxon>Pseudomonadota</taxon>
        <taxon>Betaproteobacteria</taxon>
        <taxon>Burkholderiales</taxon>
        <taxon>Burkholderiaceae</taxon>
        <taxon>Ralstonia</taxon>
        <taxon>Ralstonia solanacearum species complex</taxon>
    </lineage>
</organism>
<geneLocation type="plasmid">
    <name>megaplasmid Rsp</name>
</geneLocation>